<keyword id="KW-0997">Cell inner membrane</keyword>
<keyword id="KW-1003">Cell membrane</keyword>
<keyword id="KW-0460">Magnesium</keyword>
<keyword id="KW-0472">Membrane</keyword>
<keyword id="KW-1185">Reference proteome</keyword>
<keyword id="KW-0808">Transferase</keyword>
<keyword id="KW-0812">Transmembrane</keyword>
<keyword id="KW-1133">Transmembrane helix</keyword>
<keyword id="KW-0831">Ubiquinone biosynthesis</keyword>
<comment type="function">
    <text evidence="1">Catalyzes the prenylation of para-hydroxybenzoate (PHB) with an all-trans polyprenyl group. Mediates the second step in the final reaction sequence of ubiquinone-8 (UQ-8) biosynthesis, which is the condensation of the polyisoprenoid side chain with PHB, generating the first membrane-bound Q intermediate 3-octaprenyl-4-hydroxybenzoate.</text>
</comment>
<comment type="catalytic activity">
    <reaction evidence="1">
        <text>all-trans-octaprenyl diphosphate + 4-hydroxybenzoate = 4-hydroxy-3-(all-trans-octaprenyl)benzoate + diphosphate</text>
        <dbReference type="Rhea" id="RHEA:27782"/>
        <dbReference type="ChEBI" id="CHEBI:1617"/>
        <dbReference type="ChEBI" id="CHEBI:17879"/>
        <dbReference type="ChEBI" id="CHEBI:33019"/>
        <dbReference type="ChEBI" id="CHEBI:57711"/>
        <dbReference type="EC" id="2.5.1.39"/>
    </reaction>
</comment>
<comment type="cofactor">
    <cofactor evidence="1">
        <name>Mg(2+)</name>
        <dbReference type="ChEBI" id="CHEBI:18420"/>
    </cofactor>
</comment>
<comment type="pathway">
    <text evidence="1">Cofactor biosynthesis; ubiquinone biosynthesis.</text>
</comment>
<comment type="subcellular location">
    <subcellularLocation>
        <location evidence="1">Cell inner membrane</location>
        <topology evidence="1">Multi-pass membrane protein</topology>
    </subcellularLocation>
</comment>
<comment type="similarity">
    <text evidence="1">Belongs to the UbiA prenyltransferase family.</text>
</comment>
<reference key="1">
    <citation type="journal article" date="2012" name="Stand. Genomic Sci.">
        <title>Complete genome sequence of Polynucleobacter necessarius subsp. asymbioticus type strain (QLW-P1DMWA-1(T)).</title>
        <authorList>
            <person name="Meincke L."/>
            <person name="Copeland A."/>
            <person name="Lapidus A."/>
            <person name="Lucas S."/>
            <person name="Berry K.W."/>
            <person name="Del Rio T.G."/>
            <person name="Hammon N."/>
            <person name="Dalin E."/>
            <person name="Tice H."/>
            <person name="Pitluck S."/>
            <person name="Richardson P."/>
            <person name="Bruce D."/>
            <person name="Goodwin L."/>
            <person name="Han C."/>
            <person name="Tapia R."/>
            <person name="Detter J.C."/>
            <person name="Schmutz J."/>
            <person name="Brettin T."/>
            <person name="Larimer F."/>
            <person name="Land M."/>
            <person name="Hauser L."/>
            <person name="Kyrpides N.C."/>
            <person name="Ivanova N."/>
            <person name="Goker M."/>
            <person name="Woyke T."/>
            <person name="Wu Q.L."/>
            <person name="Pockl M."/>
            <person name="Hahn M.W."/>
            <person name="Klenk H.P."/>
        </authorList>
    </citation>
    <scope>NUCLEOTIDE SEQUENCE [LARGE SCALE GENOMIC DNA]</scope>
    <source>
        <strain>DSM 18221 / CIP 109841 / QLW-P1DMWA-1</strain>
    </source>
</reference>
<accession>A4SZT5</accession>
<sequence length="287" mass="31927">MSLKERFTSYAYLIRLDKPIGTLLLLWPTLWALWLASSGTPSLQMLMIFIAGTFLMRSAGCAINDYADRDFDRHVQRTKHRPVTSGKISGKEAVVVAGVLALIAFLLIQPLNIFTKELSVLALLVAFIYPFTKRFLAIPQAVLGIAFGFGIPMAYAAVLDFIPLEAWVLFVGNIFWAIAYDTAYAMVDRDDDLRLGLRTSAITFGSYEVLAIAFSYGVLFVSQLWVAHLASLSNYFLIGWGAALGCAIYQLKLVSSRKREDCFLAFRHNNWLGGFLFLGIVLGLSIQ</sequence>
<name>UBIA_POLAQ</name>
<protein>
    <recommendedName>
        <fullName evidence="1">4-hydroxybenzoate octaprenyltransferase</fullName>
        <ecNumber evidence="1">2.5.1.39</ecNumber>
    </recommendedName>
    <alternativeName>
        <fullName evidence="1">4-HB polyprenyltransferase</fullName>
    </alternativeName>
</protein>
<feature type="chain" id="PRO_0000336982" description="4-hydroxybenzoate octaprenyltransferase">
    <location>
        <begin position="1"/>
        <end position="287"/>
    </location>
</feature>
<feature type="transmembrane region" description="Helical" evidence="1">
    <location>
        <begin position="19"/>
        <end position="39"/>
    </location>
</feature>
<feature type="transmembrane region" description="Helical" evidence="1">
    <location>
        <begin position="43"/>
        <end position="63"/>
    </location>
</feature>
<feature type="transmembrane region" description="Helical" evidence="1">
    <location>
        <begin position="94"/>
        <end position="114"/>
    </location>
</feature>
<feature type="transmembrane region" description="Helical" evidence="1">
    <location>
        <begin position="118"/>
        <end position="138"/>
    </location>
</feature>
<feature type="transmembrane region" description="Helical" evidence="1">
    <location>
        <begin position="142"/>
        <end position="162"/>
    </location>
</feature>
<feature type="transmembrane region" description="Helical" evidence="1">
    <location>
        <begin position="167"/>
        <end position="187"/>
    </location>
</feature>
<feature type="transmembrane region" description="Helical" evidence="1">
    <location>
        <begin position="209"/>
        <end position="229"/>
    </location>
</feature>
<feature type="transmembrane region" description="Helical" evidence="1">
    <location>
        <begin position="235"/>
        <end position="255"/>
    </location>
</feature>
<feature type="transmembrane region" description="Helical" evidence="1">
    <location>
        <begin position="263"/>
        <end position="283"/>
    </location>
</feature>
<gene>
    <name evidence="1" type="primary">ubiA</name>
    <name type="ordered locus">Pnuc_1786</name>
</gene>
<organism>
    <name type="scientific">Polynucleobacter asymbioticus (strain DSM 18221 / CIP 109841 / QLW-P1DMWA-1)</name>
    <name type="common">Polynucleobacter necessarius subsp. asymbioticus</name>
    <dbReference type="NCBI Taxonomy" id="312153"/>
    <lineage>
        <taxon>Bacteria</taxon>
        <taxon>Pseudomonadati</taxon>
        <taxon>Pseudomonadota</taxon>
        <taxon>Betaproteobacteria</taxon>
        <taxon>Burkholderiales</taxon>
        <taxon>Burkholderiaceae</taxon>
        <taxon>Polynucleobacter</taxon>
    </lineage>
</organism>
<proteinExistence type="inferred from homology"/>
<evidence type="ECO:0000255" key="1">
    <source>
        <dbReference type="HAMAP-Rule" id="MF_01635"/>
    </source>
</evidence>
<dbReference type="EC" id="2.5.1.39" evidence="1"/>
<dbReference type="EMBL" id="CP000655">
    <property type="protein sequence ID" value="ABP34999.1"/>
    <property type="molecule type" value="Genomic_DNA"/>
</dbReference>
<dbReference type="RefSeq" id="WP_011903622.1">
    <property type="nucleotide sequence ID" value="NC_009379.1"/>
</dbReference>
<dbReference type="SMR" id="A4SZT5"/>
<dbReference type="GeneID" id="31482175"/>
<dbReference type="KEGG" id="pnu:Pnuc_1786"/>
<dbReference type="eggNOG" id="COG0382">
    <property type="taxonomic scope" value="Bacteria"/>
</dbReference>
<dbReference type="HOGENOM" id="CLU_034879_1_0_4"/>
<dbReference type="UniPathway" id="UPA00232"/>
<dbReference type="Proteomes" id="UP000000231">
    <property type="component" value="Chromosome"/>
</dbReference>
<dbReference type="GO" id="GO:0005886">
    <property type="term" value="C:plasma membrane"/>
    <property type="evidence" value="ECO:0007669"/>
    <property type="project" value="UniProtKB-SubCell"/>
</dbReference>
<dbReference type="GO" id="GO:0008412">
    <property type="term" value="F:4-hydroxybenzoate polyprenyltransferase activity"/>
    <property type="evidence" value="ECO:0007669"/>
    <property type="project" value="UniProtKB-UniRule"/>
</dbReference>
<dbReference type="GO" id="GO:0006744">
    <property type="term" value="P:ubiquinone biosynthetic process"/>
    <property type="evidence" value="ECO:0007669"/>
    <property type="project" value="UniProtKB-UniRule"/>
</dbReference>
<dbReference type="CDD" id="cd13959">
    <property type="entry name" value="PT_UbiA_COQ2"/>
    <property type="match status" value="1"/>
</dbReference>
<dbReference type="FunFam" id="1.10.357.140:FF:000002">
    <property type="entry name" value="4-hydroxybenzoate octaprenyltransferase"/>
    <property type="match status" value="1"/>
</dbReference>
<dbReference type="FunFam" id="1.20.120.1780:FF:000001">
    <property type="entry name" value="4-hydroxybenzoate octaprenyltransferase"/>
    <property type="match status" value="1"/>
</dbReference>
<dbReference type="Gene3D" id="1.10.357.140">
    <property type="entry name" value="UbiA prenyltransferase"/>
    <property type="match status" value="1"/>
</dbReference>
<dbReference type="Gene3D" id="1.20.120.1780">
    <property type="entry name" value="UbiA prenyltransferase"/>
    <property type="match status" value="1"/>
</dbReference>
<dbReference type="HAMAP" id="MF_01635">
    <property type="entry name" value="UbiA"/>
    <property type="match status" value="1"/>
</dbReference>
<dbReference type="InterPro" id="IPR006370">
    <property type="entry name" value="HB_polyprenyltransferase-like"/>
</dbReference>
<dbReference type="InterPro" id="IPR039653">
    <property type="entry name" value="Prenyltransferase"/>
</dbReference>
<dbReference type="InterPro" id="IPR000537">
    <property type="entry name" value="UbiA_prenyltransferase"/>
</dbReference>
<dbReference type="InterPro" id="IPR030470">
    <property type="entry name" value="UbiA_prenylTrfase_CS"/>
</dbReference>
<dbReference type="InterPro" id="IPR044878">
    <property type="entry name" value="UbiA_sf"/>
</dbReference>
<dbReference type="NCBIfam" id="TIGR01474">
    <property type="entry name" value="ubiA_proteo"/>
    <property type="match status" value="1"/>
</dbReference>
<dbReference type="PANTHER" id="PTHR11048:SF28">
    <property type="entry name" value="4-HYDROXYBENZOATE POLYPRENYLTRANSFERASE, MITOCHONDRIAL"/>
    <property type="match status" value="1"/>
</dbReference>
<dbReference type="PANTHER" id="PTHR11048">
    <property type="entry name" value="PRENYLTRANSFERASES"/>
    <property type="match status" value="1"/>
</dbReference>
<dbReference type="Pfam" id="PF01040">
    <property type="entry name" value="UbiA"/>
    <property type="match status" value="1"/>
</dbReference>
<dbReference type="PROSITE" id="PS00943">
    <property type="entry name" value="UBIA"/>
    <property type="match status" value="1"/>
</dbReference>